<evidence type="ECO:0000255" key="1">
    <source>
        <dbReference type="HAMAP-Rule" id="MF_01342"/>
    </source>
</evidence>
<evidence type="ECO:0000305" key="2"/>
<dbReference type="EMBL" id="AP009371">
    <property type="protein sequence ID" value="BAF50234.1"/>
    <property type="molecule type" value="Genomic_DNA"/>
</dbReference>
<dbReference type="RefSeq" id="YP_001123410.1">
    <property type="nucleotide sequence ID" value="NC_009270.1"/>
</dbReference>
<dbReference type="SMR" id="A4QKM9"/>
<dbReference type="GeneID" id="4961703"/>
<dbReference type="GO" id="GO:0009507">
    <property type="term" value="C:chloroplast"/>
    <property type="evidence" value="ECO:0007669"/>
    <property type="project" value="UniProtKB-SubCell"/>
</dbReference>
<dbReference type="GO" id="GO:0005762">
    <property type="term" value="C:mitochondrial large ribosomal subunit"/>
    <property type="evidence" value="ECO:0007669"/>
    <property type="project" value="TreeGrafter"/>
</dbReference>
<dbReference type="GO" id="GO:0019843">
    <property type="term" value="F:rRNA binding"/>
    <property type="evidence" value="ECO:0007669"/>
    <property type="project" value="InterPro"/>
</dbReference>
<dbReference type="GO" id="GO:0003735">
    <property type="term" value="F:structural constituent of ribosome"/>
    <property type="evidence" value="ECO:0007669"/>
    <property type="project" value="InterPro"/>
</dbReference>
<dbReference type="GO" id="GO:0032543">
    <property type="term" value="P:mitochondrial translation"/>
    <property type="evidence" value="ECO:0007669"/>
    <property type="project" value="TreeGrafter"/>
</dbReference>
<dbReference type="CDD" id="cd01433">
    <property type="entry name" value="Ribosomal_L16_L10e"/>
    <property type="match status" value="1"/>
</dbReference>
<dbReference type="FunFam" id="3.90.1170.10:FF:000001">
    <property type="entry name" value="50S ribosomal protein L16"/>
    <property type="match status" value="1"/>
</dbReference>
<dbReference type="Gene3D" id="3.90.1170.10">
    <property type="entry name" value="Ribosomal protein L10e/L16"/>
    <property type="match status" value="1"/>
</dbReference>
<dbReference type="HAMAP" id="MF_01342">
    <property type="entry name" value="Ribosomal_uL16"/>
    <property type="match status" value="1"/>
</dbReference>
<dbReference type="InterPro" id="IPR047873">
    <property type="entry name" value="Ribosomal_uL16"/>
</dbReference>
<dbReference type="InterPro" id="IPR000114">
    <property type="entry name" value="Ribosomal_uL16_bact-type"/>
</dbReference>
<dbReference type="InterPro" id="IPR020798">
    <property type="entry name" value="Ribosomal_uL16_CS"/>
</dbReference>
<dbReference type="InterPro" id="IPR016180">
    <property type="entry name" value="Ribosomal_uL16_dom"/>
</dbReference>
<dbReference type="InterPro" id="IPR036920">
    <property type="entry name" value="Ribosomal_uL16_sf"/>
</dbReference>
<dbReference type="NCBIfam" id="TIGR01164">
    <property type="entry name" value="rplP_bact"/>
    <property type="match status" value="1"/>
</dbReference>
<dbReference type="PANTHER" id="PTHR12220">
    <property type="entry name" value="50S/60S RIBOSOMAL PROTEIN L16"/>
    <property type="match status" value="1"/>
</dbReference>
<dbReference type="PANTHER" id="PTHR12220:SF13">
    <property type="entry name" value="LARGE RIBOSOMAL SUBUNIT PROTEIN UL16M"/>
    <property type="match status" value="1"/>
</dbReference>
<dbReference type="Pfam" id="PF00252">
    <property type="entry name" value="Ribosomal_L16"/>
    <property type="match status" value="1"/>
</dbReference>
<dbReference type="PRINTS" id="PR00060">
    <property type="entry name" value="RIBOSOMALL16"/>
</dbReference>
<dbReference type="SUPFAM" id="SSF54686">
    <property type="entry name" value="Ribosomal protein L16p/L10e"/>
    <property type="match status" value="1"/>
</dbReference>
<dbReference type="PROSITE" id="PS00586">
    <property type="entry name" value="RIBOSOMAL_L16_1"/>
    <property type="match status" value="1"/>
</dbReference>
<dbReference type="PROSITE" id="PS00701">
    <property type="entry name" value="RIBOSOMAL_L16_2"/>
    <property type="match status" value="1"/>
</dbReference>
<name>RK16_CAPBU</name>
<comment type="subunit">
    <text evidence="1">Part of the 50S ribosomal subunit.</text>
</comment>
<comment type="subcellular location">
    <subcellularLocation>
        <location>Plastid</location>
        <location>Chloroplast</location>
    </subcellularLocation>
</comment>
<comment type="similarity">
    <text evidence="1">Belongs to the universal ribosomal protein uL16 family.</text>
</comment>
<protein>
    <recommendedName>
        <fullName evidence="1">Large ribosomal subunit protein uL16c</fullName>
    </recommendedName>
    <alternativeName>
        <fullName evidence="2">50S ribosomal protein L16, chloroplastic</fullName>
    </alternativeName>
</protein>
<organism>
    <name type="scientific">Capsella bursa-pastoris</name>
    <name type="common">Shepherd's purse</name>
    <name type="synonym">Thlaspi bursa-pastoris</name>
    <dbReference type="NCBI Taxonomy" id="3719"/>
    <lineage>
        <taxon>Eukaryota</taxon>
        <taxon>Viridiplantae</taxon>
        <taxon>Streptophyta</taxon>
        <taxon>Embryophyta</taxon>
        <taxon>Tracheophyta</taxon>
        <taxon>Spermatophyta</taxon>
        <taxon>Magnoliopsida</taxon>
        <taxon>eudicotyledons</taxon>
        <taxon>Gunneridae</taxon>
        <taxon>Pentapetalae</taxon>
        <taxon>rosids</taxon>
        <taxon>malvids</taxon>
        <taxon>Brassicales</taxon>
        <taxon>Brassicaceae</taxon>
        <taxon>Camelineae</taxon>
        <taxon>Capsella</taxon>
    </lineage>
</organism>
<feature type="chain" id="PRO_0000354619" description="Large ribosomal subunit protein uL16c">
    <location>
        <begin position="1"/>
        <end position="135"/>
    </location>
</feature>
<sequence length="135" mass="15294">MLSPKRTRFRKQHRGRLKGISSRGNRICFGRYALQTLEPAWITSRQIEAGRRAMTRNVRRGGKIWVRIFPDKPVTVRPAETRMGSGKGSPEYWVAVVKPGKILYEMGGVPENIARKAISIAASKMPIKTQFIISE</sequence>
<geneLocation type="chloroplast"/>
<proteinExistence type="inferred from homology"/>
<keyword id="KW-0150">Chloroplast</keyword>
<keyword id="KW-0934">Plastid</keyword>
<keyword id="KW-0687">Ribonucleoprotein</keyword>
<keyword id="KW-0689">Ribosomal protein</keyword>
<reference key="1">
    <citation type="submission" date="2007-03" db="EMBL/GenBank/DDBJ databases">
        <title>Sequencing analysis of Capsella bursa-pastoris JO22 chloroplast DNA.</title>
        <authorList>
            <person name="Hosouchi T."/>
            <person name="Tsuruoka H."/>
            <person name="Kotani H."/>
        </authorList>
    </citation>
    <scope>NUCLEOTIDE SEQUENCE [LARGE SCALE GENOMIC DNA]</scope>
</reference>
<gene>
    <name evidence="1" type="primary">rpl16</name>
</gene>
<accession>A4QKM9</accession>